<dbReference type="GO" id="GO:0005576">
    <property type="term" value="C:extracellular region"/>
    <property type="evidence" value="ECO:0007669"/>
    <property type="project" value="UniProtKB-SubCell"/>
</dbReference>
<dbReference type="GO" id="GO:0090729">
    <property type="term" value="F:toxin activity"/>
    <property type="evidence" value="ECO:0007669"/>
    <property type="project" value="UniProtKB-KW"/>
</dbReference>
<protein>
    <recommendedName>
        <fullName evidence="1">Toxin Tx1</fullName>
        <shortName evidence="3">PpTx1</shortName>
    </recommendedName>
</protein>
<reference evidence="4" key="1">
    <citation type="submission" date="2014-07" db="UniProtKB">
        <title>PpTx1 from venom of spider Phoneutria pertyi.</title>
        <authorList>
            <person name="Sousa N.A.S."/>
            <person name="Goncalves J.M."/>
            <person name="Cordeiro M.N."/>
            <person name="Borges M.H."/>
        </authorList>
    </citation>
    <scope>PROTEIN SEQUENCE</scope>
    <scope>SUBCELLULAR LOCATION</scope>
    <scope>IDENTIFICATION BY MASS SPECTROMETRY</scope>
    <source>
        <tissue evidence="3">Venom</tissue>
    </source>
</reference>
<comment type="subcellular location">
    <subcellularLocation>
        <location evidence="2">Secreted</location>
    </subcellularLocation>
</comment>
<comment type="tissue specificity">
    <text evidence="5">Expressed by the venom gland.</text>
</comment>
<comment type="similarity">
    <text evidence="4">Belongs to the neurotoxin 04 (omega-agtx) family. 02 (Tx1) subfamily.</text>
</comment>
<keyword id="KW-0903">Direct protein sequencing</keyword>
<keyword id="KW-0528">Neurotoxin</keyword>
<keyword id="KW-0964">Secreted</keyword>
<keyword id="KW-0800">Toxin</keyword>
<accession>C0HJM7</accession>
<organism>
    <name type="scientific">Phoneutria pertyi</name>
    <name type="common">Brazilian wandering spider</name>
    <dbReference type="NCBI Taxonomy" id="1526577"/>
    <lineage>
        <taxon>Eukaryota</taxon>
        <taxon>Metazoa</taxon>
        <taxon>Ecdysozoa</taxon>
        <taxon>Arthropoda</taxon>
        <taxon>Chelicerata</taxon>
        <taxon>Arachnida</taxon>
        <taxon>Araneae</taxon>
        <taxon>Araneomorphae</taxon>
        <taxon>Entelegynae</taxon>
        <taxon>Lycosoidea</taxon>
        <taxon>Ctenidae</taxon>
        <taxon>Phoneutria</taxon>
    </lineage>
</organism>
<name>TXL1_PHOPT</name>
<proteinExistence type="evidence at protein level"/>
<evidence type="ECO:0000250" key="1">
    <source>
        <dbReference type="UniProtKB" id="P17727"/>
    </source>
</evidence>
<evidence type="ECO:0000269" key="2">
    <source ref="1"/>
</evidence>
<evidence type="ECO:0000303" key="3">
    <source ref="1"/>
</evidence>
<evidence type="ECO:0000305" key="4"/>
<evidence type="ECO:0000305" key="5">
    <source ref="1"/>
</evidence>
<sequence length="10" mass="1023">AELTSCFPVG</sequence>
<feature type="peptide" id="PRO_0000430862" description="Toxin Tx1" evidence="2">
    <location>
        <begin position="1"/>
        <end position="10" status="greater than"/>
    </location>
</feature>
<feature type="non-terminal residue" evidence="2">
    <location>
        <position position="10"/>
    </location>
</feature>